<sequence length="240" mass="27226">MNTLFIADLHLSAQEPAITAGFLRFLRQDAIHADALYILGDLFEAWIGDDDPEPLHGEIAAALKALQQAGVPCYFIHGNRDFLVGKRFARTSGMQLLPEEQVLDLYGRKILILHGDTLCTDDQAYQQFRRKVHNPLIQKLFLAMPLRWRLKIAAKMRARSQQSNQYKSDSIMDVNPQAVEQAMLRHKVHWMIHGHTHRPAVHELALSNGKAHRVVLGAWHVEGSMIKVSADAVELIQFPF</sequence>
<proteinExistence type="inferred from homology"/>
<keyword id="KW-0997">Cell inner membrane</keyword>
<keyword id="KW-1003">Cell membrane</keyword>
<keyword id="KW-0378">Hydrolase</keyword>
<keyword id="KW-0441">Lipid A biosynthesis</keyword>
<keyword id="KW-0444">Lipid biosynthesis</keyword>
<keyword id="KW-0443">Lipid metabolism</keyword>
<keyword id="KW-0464">Manganese</keyword>
<keyword id="KW-0472">Membrane</keyword>
<keyword id="KW-0479">Metal-binding</keyword>
<dbReference type="EC" id="3.6.1.54" evidence="1"/>
<dbReference type="EMBL" id="CP000826">
    <property type="protein sequence ID" value="ABV40268.1"/>
    <property type="molecule type" value="Genomic_DNA"/>
</dbReference>
<dbReference type="SMR" id="A8GAX8"/>
<dbReference type="STRING" id="399741.Spro_1164"/>
<dbReference type="KEGG" id="spe:Spro_1164"/>
<dbReference type="eggNOG" id="COG2908">
    <property type="taxonomic scope" value="Bacteria"/>
</dbReference>
<dbReference type="HOGENOM" id="CLU_074586_0_0_6"/>
<dbReference type="OrthoDB" id="9783283at2"/>
<dbReference type="UniPathway" id="UPA00359">
    <property type="reaction ID" value="UER00480"/>
</dbReference>
<dbReference type="GO" id="GO:0005737">
    <property type="term" value="C:cytoplasm"/>
    <property type="evidence" value="ECO:0007669"/>
    <property type="project" value="InterPro"/>
</dbReference>
<dbReference type="GO" id="GO:0019897">
    <property type="term" value="C:extrinsic component of plasma membrane"/>
    <property type="evidence" value="ECO:0007669"/>
    <property type="project" value="UniProtKB-UniRule"/>
</dbReference>
<dbReference type="GO" id="GO:0030145">
    <property type="term" value="F:manganese ion binding"/>
    <property type="evidence" value="ECO:0007669"/>
    <property type="project" value="UniProtKB-UniRule"/>
</dbReference>
<dbReference type="GO" id="GO:0008758">
    <property type="term" value="F:UDP-2,3-diacylglucosamine hydrolase activity"/>
    <property type="evidence" value="ECO:0007669"/>
    <property type="project" value="UniProtKB-UniRule"/>
</dbReference>
<dbReference type="GO" id="GO:0009245">
    <property type="term" value="P:lipid A biosynthetic process"/>
    <property type="evidence" value="ECO:0007669"/>
    <property type="project" value="UniProtKB-UniRule"/>
</dbReference>
<dbReference type="CDD" id="cd07398">
    <property type="entry name" value="MPP_YbbF-LpxH"/>
    <property type="match status" value="1"/>
</dbReference>
<dbReference type="FunFam" id="3.60.21.10:FF:000012">
    <property type="entry name" value="UDP-2,3-diacylglucosamine hydrolase"/>
    <property type="match status" value="1"/>
</dbReference>
<dbReference type="Gene3D" id="3.60.21.10">
    <property type="match status" value="1"/>
</dbReference>
<dbReference type="HAMAP" id="MF_00575">
    <property type="entry name" value="LpxH"/>
    <property type="match status" value="1"/>
</dbReference>
<dbReference type="InterPro" id="IPR004843">
    <property type="entry name" value="Calcineurin-like_PHP_ApaH"/>
</dbReference>
<dbReference type="InterPro" id="IPR043461">
    <property type="entry name" value="LpxH-like"/>
</dbReference>
<dbReference type="InterPro" id="IPR029052">
    <property type="entry name" value="Metallo-depent_PP-like"/>
</dbReference>
<dbReference type="InterPro" id="IPR010138">
    <property type="entry name" value="UDP-diacylglucosamine_Hdrlase"/>
</dbReference>
<dbReference type="NCBIfam" id="TIGR01854">
    <property type="entry name" value="lipid_A_lpxH"/>
    <property type="match status" value="1"/>
</dbReference>
<dbReference type="NCBIfam" id="NF003743">
    <property type="entry name" value="PRK05340.1"/>
    <property type="match status" value="1"/>
</dbReference>
<dbReference type="PANTHER" id="PTHR34990:SF1">
    <property type="entry name" value="UDP-2,3-DIACYLGLUCOSAMINE HYDROLASE"/>
    <property type="match status" value="1"/>
</dbReference>
<dbReference type="PANTHER" id="PTHR34990">
    <property type="entry name" value="UDP-2,3-DIACYLGLUCOSAMINE HYDROLASE-RELATED"/>
    <property type="match status" value="1"/>
</dbReference>
<dbReference type="Pfam" id="PF00149">
    <property type="entry name" value="Metallophos"/>
    <property type="match status" value="1"/>
</dbReference>
<dbReference type="SUPFAM" id="SSF56300">
    <property type="entry name" value="Metallo-dependent phosphatases"/>
    <property type="match status" value="1"/>
</dbReference>
<protein>
    <recommendedName>
        <fullName evidence="1">UDP-2,3-diacylglucosamine hydrolase</fullName>
        <ecNumber evidence="1">3.6.1.54</ecNumber>
    </recommendedName>
    <alternativeName>
        <fullName evidence="1">UDP-2,3-diacylglucosamine diphosphatase</fullName>
    </alternativeName>
</protein>
<evidence type="ECO:0000255" key="1">
    <source>
        <dbReference type="HAMAP-Rule" id="MF_00575"/>
    </source>
</evidence>
<reference key="1">
    <citation type="submission" date="2007-09" db="EMBL/GenBank/DDBJ databases">
        <title>Complete sequence of chromosome of Serratia proteamaculans 568.</title>
        <authorList>
            <consortium name="US DOE Joint Genome Institute"/>
            <person name="Copeland A."/>
            <person name="Lucas S."/>
            <person name="Lapidus A."/>
            <person name="Barry K."/>
            <person name="Glavina del Rio T."/>
            <person name="Dalin E."/>
            <person name="Tice H."/>
            <person name="Pitluck S."/>
            <person name="Chain P."/>
            <person name="Malfatti S."/>
            <person name="Shin M."/>
            <person name="Vergez L."/>
            <person name="Schmutz J."/>
            <person name="Larimer F."/>
            <person name="Land M."/>
            <person name="Hauser L."/>
            <person name="Kyrpides N."/>
            <person name="Kim E."/>
            <person name="Taghavi S."/>
            <person name="Newman L."/>
            <person name="Vangronsveld J."/>
            <person name="van der Lelie D."/>
            <person name="Richardson P."/>
        </authorList>
    </citation>
    <scope>NUCLEOTIDE SEQUENCE [LARGE SCALE GENOMIC DNA]</scope>
    <source>
        <strain>568</strain>
    </source>
</reference>
<accession>A8GAX8</accession>
<feature type="chain" id="PRO_1000061175" description="UDP-2,3-diacylglucosamine hydrolase">
    <location>
        <begin position="1"/>
        <end position="240"/>
    </location>
</feature>
<feature type="binding site" evidence="1">
    <location>
        <position position="8"/>
    </location>
    <ligand>
        <name>Mn(2+)</name>
        <dbReference type="ChEBI" id="CHEBI:29035"/>
        <label>1</label>
    </ligand>
</feature>
<feature type="binding site" evidence="1">
    <location>
        <position position="10"/>
    </location>
    <ligand>
        <name>Mn(2+)</name>
        <dbReference type="ChEBI" id="CHEBI:29035"/>
        <label>1</label>
    </ligand>
</feature>
<feature type="binding site" evidence="1">
    <location>
        <position position="41"/>
    </location>
    <ligand>
        <name>Mn(2+)</name>
        <dbReference type="ChEBI" id="CHEBI:29035"/>
        <label>1</label>
    </ligand>
</feature>
<feature type="binding site" evidence="1">
    <location>
        <position position="41"/>
    </location>
    <ligand>
        <name>Mn(2+)</name>
        <dbReference type="ChEBI" id="CHEBI:29035"/>
        <label>2</label>
    </ligand>
</feature>
<feature type="binding site" evidence="1">
    <location>
        <begin position="79"/>
        <end position="80"/>
    </location>
    <ligand>
        <name>substrate</name>
    </ligand>
</feature>
<feature type="binding site" evidence="1">
    <location>
        <position position="79"/>
    </location>
    <ligand>
        <name>Mn(2+)</name>
        <dbReference type="ChEBI" id="CHEBI:29035"/>
        <label>2</label>
    </ligand>
</feature>
<feature type="binding site" evidence="1">
    <location>
        <position position="114"/>
    </location>
    <ligand>
        <name>Mn(2+)</name>
        <dbReference type="ChEBI" id="CHEBI:29035"/>
        <label>2</label>
    </ligand>
</feature>
<feature type="binding site" evidence="1">
    <location>
        <position position="122"/>
    </location>
    <ligand>
        <name>substrate</name>
    </ligand>
</feature>
<feature type="binding site" evidence="1">
    <location>
        <position position="160"/>
    </location>
    <ligand>
        <name>substrate</name>
    </ligand>
</feature>
<feature type="binding site" evidence="1">
    <location>
        <position position="164"/>
    </location>
    <ligand>
        <name>substrate</name>
    </ligand>
</feature>
<feature type="binding site" evidence="1">
    <location>
        <position position="167"/>
    </location>
    <ligand>
        <name>substrate</name>
    </ligand>
</feature>
<feature type="binding site" evidence="1">
    <location>
        <position position="195"/>
    </location>
    <ligand>
        <name>Mn(2+)</name>
        <dbReference type="ChEBI" id="CHEBI:29035"/>
        <label>2</label>
    </ligand>
</feature>
<feature type="binding site" evidence="1">
    <location>
        <position position="195"/>
    </location>
    <ligand>
        <name>substrate</name>
    </ligand>
</feature>
<feature type="binding site" evidence="1">
    <location>
        <position position="197"/>
    </location>
    <ligand>
        <name>Mn(2+)</name>
        <dbReference type="ChEBI" id="CHEBI:29035"/>
        <label>1</label>
    </ligand>
</feature>
<organism>
    <name type="scientific">Serratia proteamaculans (strain 568)</name>
    <dbReference type="NCBI Taxonomy" id="399741"/>
    <lineage>
        <taxon>Bacteria</taxon>
        <taxon>Pseudomonadati</taxon>
        <taxon>Pseudomonadota</taxon>
        <taxon>Gammaproteobacteria</taxon>
        <taxon>Enterobacterales</taxon>
        <taxon>Yersiniaceae</taxon>
        <taxon>Serratia</taxon>
    </lineage>
</organism>
<name>LPXH_SERP5</name>
<comment type="function">
    <text evidence="1">Hydrolyzes the pyrophosphate bond of UDP-2,3-diacylglucosamine to yield 2,3-diacylglucosamine 1-phosphate (lipid X) and UMP by catalyzing the attack of water at the alpha-P atom. Involved in the biosynthesis of lipid A, a phosphorylated glycolipid that anchors the lipopolysaccharide to the outer membrane of the cell.</text>
</comment>
<comment type="catalytic activity">
    <reaction evidence="1">
        <text>UDP-2-N,3-O-bis[(3R)-3-hydroxytetradecanoyl]-alpha-D-glucosamine + H2O = 2-N,3-O-bis[(3R)-3-hydroxytetradecanoyl]-alpha-D-glucosaminyl 1-phosphate + UMP + 2 H(+)</text>
        <dbReference type="Rhea" id="RHEA:25213"/>
        <dbReference type="ChEBI" id="CHEBI:15377"/>
        <dbReference type="ChEBI" id="CHEBI:15378"/>
        <dbReference type="ChEBI" id="CHEBI:57865"/>
        <dbReference type="ChEBI" id="CHEBI:57957"/>
        <dbReference type="ChEBI" id="CHEBI:78847"/>
        <dbReference type="EC" id="3.6.1.54"/>
    </reaction>
</comment>
<comment type="cofactor">
    <cofactor evidence="1">
        <name>Mn(2+)</name>
        <dbReference type="ChEBI" id="CHEBI:29035"/>
    </cofactor>
    <text evidence="1">Binds 2 Mn(2+) ions per subunit in a binuclear metal center.</text>
</comment>
<comment type="pathway">
    <text evidence="1">Glycolipid biosynthesis; lipid IV(A) biosynthesis; lipid IV(A) from (3R)-3-hydroxytetradecanoyl-[acyl-carrier-protein] and UDP-N-acetyl-alpha-D-glucosamine: step 4/6.</text>
</comment>
<comment type="subcellular location">
    <subcellularLocation>
        <location evidence="1">Cell inner membrane</location>
        <topology evidence="1">Peripheral membrane protein</topology>
        <orientation evidence="1">Cytoplasmic side</orientation>
    </subcellularLocation>
</comment>
<comment type="similarity">
    <text evidence="1">Belongs to the LpxH family.</text>
</comment>
<gene>
    <name evidence="1" type="primary">lpxH</name>
    <name type="ordered locus">Spro_1164</name>
</gene>